<name>RSMG_FRAP2</name>
<organism>
    <name type="scientific">Francisella philomiragia subsp. philomiragia (strain ATCC 25017 / CCUG 19701 / FSC 153 / O#319-036)</name>
    <dbReference type="NCBI Taxonomy" id="484022"/>
    <lineage>
        <taxon>Bacteria</taxon>
        <taxon>Pseudomonadati</taxon>
        <taxon>Pseudomonadota</taxon>
        <taxon>Gammaproteobacteria</taxon>
        <taxon>Thiotrichales</taxon>
        <taxon>Francisellaceae</taxon>
        <taxon>Francisella</taxon>
    </lineage>
</organism>
<reference key="1">
    <citation type="submission" date="2007-12" db="EMBL/GenBank/DDBJ databases">
        <title>Complete sequence of chromosome of Francisella philomiragia subsp. philomiragia ATCC 25017.</title>
        <authorList>
            <consortium name="US DOE Joint Genome Institute"/>
            <person name="Copeland A."/>
            <person name="Lucas S."/>
            <person name="Lapidus A."/>
            <person name="Barry K."/>
            <person name="Detter J.C."/>
            <person name="Glavina del Rio T."/>
            <person name="Hammon N."/>
            <person name="Israni S."/>
            <person name="Dalin E."/>
            <person name="Tice H."/>
            <person name="Pitluck S."/>
            <person name="Chain P."/>
            <person name="Malfatti S."/>
            <person name="Shin M."/>
            <person name="Vergez L."/>
            <person name="Schmutz J."/>
            <person name="Larimer F."/>
            <person name="Land M."/>
            <person name="Hauser L."/>
            <person name="Richardson P."/>
        </authorList>
    </citation>
    <scope>NUCLEOTIDE SEQUENCE [LARGE SCALE GENOMIC DNA]</scope>
    <source>
        <strain>ATCC 25017 / CCUG 19701 / FSC 153 / O#319-036</strain>
    </source>
</reference>
<keyword id="KW-0963">Cytoplasm</keyword>
<keyword id="KW-0489">Methyltransferase</keyword>
<keyword id="KW-0698">rRNA processing</keyword>
<keyword id="KW-0949">S-adenosyl-L-methionine</keyword>
<keyword id="KW-0808">Transferase</keyword>
<comment type="function">
    <text evidence="1">Specifically methylates the N7 position of guanine in position 527 of 16S rRNA.</text>
</comment>
<comment type="catalytic activity">
    <reaction evidence="1">
        <text>guanosine(527) in 16S rRNA + S-adenosyl-L-methionine = N(7)-methylguanosine(527) in 16S rRNA + S-adenosyl-L-homocysteine</text>
        <dbReference type="Rhea" id="RHEA:42732"/>
        <dbReference type="Rhea" id="RHEA-COMP:10209"/>
        <dbReference type="Rhea" id="RHEA-COMP:10210"/>
        <dbReference type="ChEBI" id="CHEBI:57856"/>
        <dbReference type="ChEBI" id="CHEBI:59789"/>
        <dbReference type="ChEBI" id="CHEBI:74269"/>
        <dbReference type="ChEBI" id="CHEBI:74480"/>
        <dbReference type="EC" id="2.1.1.170"/>
    </reaction>
</comment>
<comment type="subcellular location">
    <subcellularLocation>
        <location evidence="1">Cytoplasm</location>
    </subcellularLocation>
</comment>
<comment type="similarity">
    <text evidence="1">Belongs to the methyltransferase superfamily. RNA methyltransferase RsmG family.</text>
</comment>
<protein>
    <recommendedName>
        <fullName evidence="1">Ribosomal RNA small subunit methyltransferase G</fullName>
        <ecNumber evidence="1">2.1.1.170</ecNumber>
    </recommendedName>
    <alternativeName>
        <fullName evidence="1">16S rRNA 7-methylguanosine methyltransferase</fullName>
        <shortName evidence="1">16S rRNA m7G methyltransferase</shortName>
    </alternativeName>
</protein>
<sequence>MDSMKDKIRQALVELDIQATEEQIEQWLEYLKLLEKWNKVYNMTAIKKIDDMLVKHLFDSLAVAKYIKGSSTVDVGTGGGLPGVVLAILYPQHQFTLVDSVGKKIMFLKNVKKSLGLDNINPLNIRIENLNGSFDNIISRAFSSVDTFYELCKHFLTKDNQMLAMKGPDLEEQNLVSLPLDIEKHSIKVPFLNAERNLIVMRKK</sequence>
<gene>
    <name evidence="1" type="primary">rsmG</name>
    <name type="ordered locus">Fphi_0731</name>
</gene>
<proteinExistence type="inferred from homology"/>
<accession>B0TW44</accession>
<feature type="chain" id="PRO_1000075222" description="Ribosomal RNA small subunit methyltransferase G">
    <location>
        <begin position="1"/>
        <end position="204"/>
    </location>
</feature>
<feature type="binding site" evidence="1">
    <location>
        <position position="76"/>
    </location>
    <ligand>
        <name>S-adenosyl-L-methionine</name>
        <dbReference type="ChEBI" id="CHEBI:59789"/>
    </ligand>
</feature>
<feature type="binding site" evidence="1">
    <location>
        <position position="81"/>
    </location>
    <ligand>
        <name>S-adenosyl-L-methionine</name>
        <dbReference type="ChEBI" id="CHEBI:59789"/>
    </ligand>
</feature>
<feature type="binding site" evidence="1">
    <location>
        <begin position="127"/>
        <end position="128"/>
    </location>
    <ligand>
        <name>S-adenosyl-L-methionine</name>
        <dbReference type="ChEBI" id="CHEBI:59789"/>
    </ligand>
</feature>
<feature type="binding site" evidence="1">
    <location>
        <position position="140"/>
    </location>
    <ligand>
        <name>S-adenosyl-L-methionine</name>
        <dbReference type="ChEBI" id="CHEBI:59789"/>
    </ligand>
</feature>
<evidence type="ECO:0000255" key="1">
    <source>
        <dbReference type="HAMAP-Rule" id="MF_00074"/>
    </source>
</evidence>
<dbReference type="EC" id="2.1.1.170" evidence="1"/>
<dbReference type="EMBL" id="CP000937">
    <property type="protein sequence ID" value="ABZ86952.1"/>
    <property type="molecule type" value="Genomic_DNA"/>
</dbReference>
<dbReference type="SMR" id="B0TW44"/>
<dbReference type="KEGG" id="fph:Fphi_0731"/>
<dbReference type="eggNOG" id="COG0357">
    <property type="taxonomic scope" value="Bacteria"/>
</dbReference>
<dbReference type="HOGENOM" id="CLU_065341_2_2_6"/>
<dbReference type="GO" id="GO:0005829">
    <property type="term" value="C:cytosol"/>
    <property type="evidence" value="ECO:0007669"/>
    <property type="project" value="TreeGrafter"/>
</dbReference>
<dbReference type="GO" id="GO:0070043">
    <property type="term" value="F:rRNA (guanine-N7-)-methyltransferase activity"/>
    <property type="evidence" value="ECO:0007669"/>
    <property type="project" value="UniProtKB-UniRule"/>
</dbReference>
<dbReference type="CDD" id="cd02440">
    <property type="entry name" value="AdoMet_MTases"/>
    <property type="match status" value="1"/>
</dbReference>
<dbReference type="Gene3D" id="3.40.50.150">
    <property type="entry name" value="Vaccinia Virus protein VP39"/>
    <property type="match status" value="1"/>
</dbReference>
<dbReference type="HAMAP" id="MF_00074">
    <property type="entry name" value="16SrRNA_methyltr_G"/>
    <property type="match status" value="1"/>
</dbReference>
<dbReference type="InterPro" id="IPR003682">
    <property type="entry name" value="rRNA_ssu_MeTfrase_G"/>
</dbReference>
<dbReference type="InterPro" id="IPR029063">
    <property type="entry name" value="SAM-dependent_MTases_sf"/>
</dbReference>
<dbReference type="NCBIfam" id="TIGR00138">
    <property type="entry name" value="rsmG_gidB"/>
    <property type="match status" value="1"/>
</dbReference>
<dbReference type="PANTHER" id="PTHR31760">
    <property type="entry name" value="S-ADENOSYL-L-METHIONINE-DEPENDENT METHYLTRANSFERASES SUPERFAMILY PROTEIN"/>
    <property type="match status" value="1"/>
</dbReference>
<dbReference type="PANTHER" id="PTHR31760:SF0">
    <property type="entry name" value="S-ADENOSYL-L-METHIONINE-DEPENDENT METHYLTRANSFERASES SUPERFAMILY PROTEIN"/>
    <property type="match status" value="1"/>
</dbReference>
<dbReference type="Pfam" id="PF02527">
    <property type="entry name" value="GidB"/>
    <property type="match status" value="1"/>
</dbReference>
<dbReference type="PIRSF" id="PIRSF003078">
    <property type="entry name" value="GidB"/>
    <property type="match status" value="1"/>
</dbReference>
<dbReference type="SUPFAM" id="SSF53335">
    <property type="entry name" value="S-adenosyl-L-methionine-dependent methyltransferases"/>
    <property type="match status" value="1"/>
</dbReference>